<protein>
    <recommendedName>
        <fullName evidence="1">Phosphoheptose isomerase</fullName>
        <ecNumber evidence="1">5.3.1.28</ecNumber>
    </recommendedName>
    <alternativeName>
        <fullName evidence="1">Sedoheptulose 7-phosphate isomerase</fullName>
    </alternativeName>
</protein>
<evidence type="ECO:0000255" key="1">
    <source>
        <dbReference type="HAMAP-Rule" id="MF_00067"/>
    </source>
</evidence>
<proteinExistence type="inferred from homology"/>
<reference key="1">
    <citation type="journal article" date="2009" name="J. Bacteriol.">
        <title>Genomic sequencing reveals regulatory mutations and recombinational events in the widely used MC4100 lineage of Escherichia coli K-12.</title>
        <authorList>
            <person name="Ferenci T."/>
            <person name="Zhou Z."/>
            <person name="Betteridge T."/>
            <person name="Ren Y."/>
            <person name="Liu Y."/>
            <person name="Feng L."/>
            <person name="Reeves P.R."/>
            <person name="Wang L."/>
        </authorList>
    </citation>
    <scope>NUCLEOTIDE SEQUENCE [LARGE SCALE GENOMIC DNA]</scope>
    <source>
        <strain>K12 / MC4100 / BW2952</strain>
    </source>
</reference>
<dbReference type="EC" id="5.3.1.28" evidence="1"/>
<dbReference type="EMBL" id="CP001396">
    <property type="protein sequence ID" value="ACR63005.1"/>
    <property type="molecule type" value="Genomic_DNA"/>
</dbReference>
<dbReference type="SMR" id="C4ZRV8"/>
<dbReference type="KEGG" id="ebw:BWG_0208"/>
<dbReference type="HOGENOM" id="CLU_080999_4_0_6"/>
<dbReference type="UniPathway" id="UPA00041">
    <property type="reaction ID" value="UER00436"/>
</dbReference>
<dbReference type="GO" id="GO:0005737">
    <property type="term" value="C:cytoplasm"/>
    <property type="evidence" value="ECO:0007669"/>
    <property type="project" value="UniProtKB-SubCell"/>
</dbReference>
<dbReference type="GO" id="GO:0097367">
    <property type="term" value="F:carbohydrate derivative binding"/>
    <property type="evidence" value="ECO:0007669"/>
    <property type="project" value="InterPro"/>
</dbReference>
<dbReference type="GO" id="GO:0008968">
    <property type="term" value="F:D-sedoheptulose 7-phosphate isomerase activity"/>
    <property type="evidence" value="ECO:0007669"/>
    <property type="project" value="UniProtKB-UniRule"/>
</dbReference>
<dbReference type="GO" id="GO:0008270">
    <property type="term" value="F:zinc ion binding"/>
    <property type="evidence" value="ECO:0007669"/>
    <property type="project" value="UniProtKB-UniRule"/>
</dbReference>
<dbReference type="GO" id="GO:0005975">
    <property type="term" value="P:carbohydrate metabolic process"/>
    <property type="evidence" value="ECO:0007669"/>
    <property type="project" value="UniProtKB-UniRule"/>
</dbReference>
<dbReference type="GO" id="GO:2001061">
    <property type="term" value="P:D-glycero-D-manno-heptose 7-phosphate biosynthetic process"/>
    <property type="evidence" value="ECO:0007669"/>
    <property type="project" value="UniProtKB-UniPathway"/>
</dbReference>
<dbReference type="CDD" id="cd05006">
    <property type="entry name" value="SIS_GmhA"/>
    <property type="match status" value="1"/>
</dbReference>
<dbReference type="FunFam" id="3.40.50.10490:FF:000013">
    <property type="entry name" value="Phosphoheptose isomerase"/>
    <property type="match status" value="1"/>
</dbReference>
<dbReference type="Gene3D" id="3.40.50.10490">
    <property type="entry name" value="Glucose-6-phosphate isomerase like protein, domain 1"/>
    <property type="match status" value="1"/>
</dbReference>
<dbReference type="HAMAP" id="MF_00067">
    <property type="entry name" value="GmhA"/>
    <property type="match status" value="1"/>
</dbReference>
<dbReference type="InterPro" id="IPR035461">
    <property type="entry name" value="GmhA/DiaA"/>
</dbReference>
<dbReference type="InterPro" id="IPR004515">
    <property type="entry name" value="Phosphoheptose_Isoase"/>
</dbReference>
<dbReference type="InterPro" id="IPR001347">
    <property type="entry name" value="SIS_dom"/>
</dbReference>
<dbReference type="InterPro" id="IPR046348">
    <property type="entry name" value="SIS_dom_sf"/>
</dbReference>
<dbReference type="InterPro" id="IPR050099">
    <property type="entry name" value="SIS_GmhA/DiaA_subfam"/>
</dbReference>
<dbReference type="NCBIfam" id="TIGR00441">
    <property type="entry name" value="gmhA"/>
    <property type="match status" value="1"/>
</dbReference>
<dbReference type="NCBIfam" id="NF001628">
    <property type="entry name" value="PRK00414.1"/>
    <property type="match status" value="1"/>
</dbReference>
<dbReference type="PANTHER" id="PTHR30390:SF7">
    <property type="entry name" value="PHOSPHOHEPTOSE ISOMERASE"/>
    <property type="match status" value="1"/>
</dbReference>
<dbReference type="PANTHER" id="PTHR30390">
    <property type="entry name" value="SEDOHEPTULOSE 7-PHOSPHATE ISOMERASE / DNAA INITIATOR-ASSOCIATING FACTOR FOR REPLICATION INITIATION"/>
    <property type="match status" value="1"/>
</dbReference>
<dbReference type="Pfam" id="PF13580">
    <property type="entry name" value="SIS_2"/>
    <property type="match status" value="1"/>
</dbReference>
<dbReference type="SUPFAM" id="SSF53697">
    <property type="entry name" value="SIS domain"/>
    <property type="match status" value="1"/>
</dbReference>
<dbReference type="PROSITE" id="PS51464">
    <property type="entry name" value="SIS"/>
    <property type="match status" value="1"/>
</dbReference>
<organism>
    <name type="scientific">Escherichia coli (strain K12 / MC4100 / BW2952)</name>
    <dbReference type="NCBI Taxonomy" id="595496"/>
    <lineage>
        <taxon>Bacteria</taxon>
        <taxon>Pseudomonadati</taxon>
        <taxon>Pseudomonadota</taxon>
        <taxon>Gammaproteobacteria</taxon>
        <taxon>Enterobacterales</taxon>
        <taxon>Enterobacteriaceae</taxon>
        <taxon>Escherichia</taxon>
    </lineage>
</organism>
<feature type="chain" id="PRO_1000202418" description="Phosphoheptose isomerase">
    <location>
        <begin position="1"/>
        <end position="192"/>
    </location>
</feature>
<feature type="domain" description="SIS" evidence="1">
    <location>
        <begin position="37"/>
        <end position="192"/>
    </location>
</feature>
<feature type="binding site" evidence="1">
    <location>
        <begin position="52"/>
        <end position="54"/>
    </location>
    <ligand>
        <name>substrate</name>
    </ligand>
</feature>
<feature type="binding site" evidence="1">
    <location>
        <position position="61"/>
    </location>
    <ligand>
        <name>Zn(2+)</name>
        <dbReference type="ChEBI" id="CHEBI:29105"/>
    </ligand>
</feature>
<feature type="binding site" evidence="1">
    <location>
        <position position="65"/>
    </location>
    <ligand>
        <name>substrate</name>
    </ligand>
</feature>
<feature type="binding site" evidence="1">
    <location>
        <position position="65"/>
    </location>
    <ligand>
        <name>Zn(2+)</name>
        <dbReference type="ChEBI" id="CHEBI:29105"/>
    </ligand>
</feature>
<feature type="binding site" evidence="1">
    <location>
        <begin position="93"/>
        <end position="94"/>
    </location>
    <ligand>
        <name>substrate</name>
    </ligand>
</feature>
<feature type="binding site" evidence="1">
    <location>
        <begin position="119"/>
        <end position="121"/>
    </location>
    <ligand>
        <name>substrate</name>
    </ligand>
</feature>
<feature type="binding site" evidence="1">
    <location>
        <position position="124"/>
    </location>
    <ligand>
        <name>substrate</name>
    </ligand>
</feature>
<feature type="binding site" evidence="1">
    <location>
        <position position="172"/>
    </location>
    <ligand>
        <name>substrate</name>
    </ligand>
</feature>
<feature type="binding site" evidence="1">
    <location>
        <position position="172"/>
    </location>
    <ligand>
        <name>Zn(2+)</name>
        <dbReference type="ChEBI" id="CHEBI:29105"/>
    </ligand>
</feature>
<feature type="binding site" evidence="1">
    <location>
        <position position="180"/>
    </location>
    <ligand>
        <name>Zn(2+)</name>
        <dbReference type="ChEBI" id="CHEBI:29105"/>
    </ligand>
</feature>
<gene>
    <name evidence="1" type="primary">gmhA</name>
    <name type="ordered locus">BWG_0208</name>
</gene>
<keyword id="KW-0119">Carbohydrate metabolism</keyword>
<keyword id="KW-0963">Cytoplasm</keyword>
<keyword id="KW-0413">Isomerase</keyword>
<keyword id="KW-0479">Metal-binding</keyword>
<keyword id="KW-0862">Zinc</keyword>
<sequence>MYQDLIRNELNEAAETLANFLKDDANIHAIQRAAVLLADSFKAGGKVLSCGNGGSHCDAMHFAEELTGRYRENRPGYPAIAISDVSHISCVGNDFGFNDIFSRYVEAVGREGDVLLGISTSGNSANVIKAIAAAREKGMKVITLTGKDGGKMAGTADIEIRVPHFGYADRIQEIHIKVIHILIQLIEKEMVK</sequence>
<name>GMHA_ECOBW</name>
<comment type="function">
    <text evidence="1">Catalyzes the isomerization of sedoheptulose 7-phosphate in D-glycero-D-manno-heptose 7-phosphate.</text>
</comment>
<comment type="catalytic activity">
    <reaction evidence="1">
        <text>2 D-sedoheptulose 7-phosphate = D-glycero-alpha-D-manno-heptose 7-phosphate + D-glycero-beta-D-manno-heptose 7-phosphate</text>
        <dbReference type="Rhea" id="RHEA:27489"/>
        <dbReference type="ChEBI" id="CHEBI:57483"/>
        <dbReference type="ChEBI" id="CHEBI:60203"/>
        <dbReference type="ChEBI" id="CHEBI:60204"/>
        <dbReference type="EC" id="5.3.1.28"/>
    </reaction>
</comment>
<comment type="cofactor">
    <cofactor evidence="1">
        <name>Zn(2+)</name>
        <dbReference type="ChEBI" id="CHEBI:29105"/>
    </cofactor>
    <text evidence="1">Binds 1 zinc ion per subunit.</text>
</comment>
<comment type="pathway">
    <text evidence="1">Carbohydrate biosynthesis; D-glycero-D-manno-heptose 7-phosphate biosynthesis; D-glycero-alpha-D-manno-heptose 7-phosphate and D-glycero-beta-D-manno-heptose 7-phosphate from sedoheptulose 7-phosphate: step 1/1.</text>
</comment>
<comment type="subunit">
    <text evidence="1">Homotetramer.</text>
</comment>
<comment type="subcellular location">
    <subcellularLocation>
        <location evidence="1">Cytoplasm</location>
    </subcellularLocation>
</comment>
<comment type="miscellaneous">
    <text evidence="1">The reaction produces a racemic mixture of D-glycero-alpha-D-manno-heptose 7-phosphate and D-glycero-beta-D-manno-heptose 7-phosphate.</text>
</comment>
<comment type="similarity">
    <text evidence="1">Belongs to the SIS family. GmhA subfamily.</text>
</comment>
<accession>C4ZRV8</accession>